<protein>
    <recommendedName>
        <fullName evidence="1">2,3-bisphosphoglycerate-dependent phosphoglycerate mutase</fullName>
        <shortName evidence="1">BPG-dependent PGAM</shortName>
        <shortName evidence="1">PGAM</shortName>
        <shortName evidence="1">Phosphoglyceromutase</shortName>
        <shortName evidence="1">dPGM</shortName>
        <ecNumber evidence="1">5.4.2.11</ecNumber>
    </recommendedName>
</protein>
<accession>B7H7P4</accession>
<reference key="1">
    <citation type="submission" date="2008-10" db="EMBL/GenBank/DDBJ databases">
        <title>Genome sequence of Bacillus cereus B4264.</title>
        <authorList>
            <person name="Dodson R.J."/>
            <person name="Durkin A.S."/>
            <person name="Rosovitz M.J."/>
            <person name="Rasko D.A."/>
            <person name="Hoffmaster A."/>
            <person name="Ravel J."/>
            <person name="Sutton G."/>
        </authorList>
    </citation>
    <scope>NUCLEOTIDE SEQUENCE [LARGE SCALE GENOMIC DNA]</scope>
    <source>
        <strain>B4264</strain>
    </source>
</reference>
<gene>
    <name evidence="1" type="primary">gpmA</name>
    <name type="ordered locus">BCB4264_A2442</name>
</gene>
<name>GPMA_BACC4</name>
<proteinExistence type="inferred from homology"/>
<dbReference type="EC" id="5.4.2.11" evidence="1"/>
<dbReference type="EMBL" id="CP001176">
    <property type="protein sequence ID" value="ACK60395.1"/>
    <property type="molecule type" value="Genomic_DNA"/>
</dbReference>
<dbReference type="RefSeq" id="WP_000594136.1">
    <property type="nucleotide sequence ID" value="NC_011725.1"/>
</dbReference>
<dbReference type="SMR" id="B7H7P4"/>
<dbReference type="KEGG" id="bcb:BCB4264_A2442"/>
<dbReference type="HOGENOM" id="CLU_033323_1_1_9"/>
<dbReference type="UniPathway" id="UPA00109">
    <property type="reaction ID" value="UER00186"/>
</dbReference>
<dbReference type="Proteomes" id="UP000007096">
    <property type="component" value="Chromosome"/>
</dbReference>
<dbReference type="GO" id="GO:0004619">
    <property type="term" value="F:phosphoglycerate mutase activity"/>
    <property type="evidence" value="ECO:0007669"/>
    <property type="project" value="UniProtKB-EC"/>
</dbReference>
<dbReference type="GO" id="GO:0006094">
    <property type="term" value="P:gluconeogenesis"/>
    <property type="evidence" value="ECO:0007669"/>
    <property type="project" value="UniProtKB-UniRule"/>
</dbReference>
<dbReference type="GO" id="GO:0006096">
    <property type="term" value="P:glycolytic process"/>
    <property type="evidence" value="ECO:0007669"/>
    <property type="project" value="UniProtKB-UniRule"/>
</dbReference>
<dbReference type="CDD" id="cd07067">
    <property type="entry name" value="HP_PGM_like"/>
    <property type="match status" value="1"/>
</dbReference>
<dbReference type="FunFam" id="3.40.50.1240:FF:000003">
    <property type="entry name" value="2,3-bisphosphoglycerate-dependent phosphoglycerate mutase"/>
    <property type="match status" value="1"/>
</dbReference>
<dbReference type="Gene3D" id="3.40.50.1240">
    <property type="entry name" value="Phosphoglycerate mutase-like"/>
    <property type="match status" value="1"/>
</dbReference>
<dbReference type="HAMAP" id="MF_01039">
    <property type="entry name" value="PGAM_GpmA"/>
    <property type="match status" value="1"/>
</dbReference>
<dbReference type="InterPro" id="IPR013078">
    <property type="entry name" value="His_Pase_superF_clade-1"/>
</dbReference>
<dbReference type="InterPro" id="IPR029033">
    <property type="entry name" value="His_PPase_superfam"/>
</dbReference>
<dbReference type="InterPro" id="IPR001345">
    <property type="entry name" value="PG/BPGM_mutase_AS"/>
</dbReference>
<dbReference type="InterPro" id="IPR005952">
    <property type="entry name" value="Phosphogly_mut1"/>
</dbReference>
<dbReference type="NCBIfam" id="TIGR01258">
    <property type="entry name" value="pgm_1"/>
    <property type="match status" value="1"/>
</dbReference>
<dbReference type="NCBIfam" id="NF010713">
    <property type="entry name" value="PRK14115.1"/>
    <property type="match status" value="1"/>
</dbReference>
<dbReference type="PANTHER" id="PTHR11931">
    <property type="entry name" value="PHOSPHOGLYCERATE MUTASE"/>
    <property type="match status" value="1"/>
</dbReference>
<dbReference type="Pfam" id="PF00300">
    <property type="entry name" value="His_Phos_1"/>
    <property type="match status" value="1"/>
</dbReference>
<dbReference type="PIRSF" id="PIRSF000709">
    <property type="entry name" value="6PFK_2-Ptase"/>
    <property type="match status" value="1"/>
</dbReference>
<dbReference type="SMART" id="SM00855">
    <property type="entry name" value="PGAM"/>
    <property type="match status" value="1"/>
</dbReference>
<dbReference type="SUPFAM" id="SSF53254">
    <property type="entry name" value="Phosphoglycerate mutase-like"/>
    <property type="match status" value="1"/>
</dbReference>
<dbReference type="PROSITE" id="PS00175">
    <property type="entry name" value="PG_MUTASE"/>
    <property type="match status" value="1"/>
</dbReference>
<evidence type="ECO:0000255" key="1">
    <source>
        <dbReference type="HAMAP-Rule" id="MF_01039"/>
    </source>
</evidence>
<sequence>MIKLVLIRHGQSLWNLENRFTGWTDVDLSENGLSEAREAGAILKKNGYTFDMAYTSVLKRAIRTLWIVLHEMDLTWVPIHKSWKLNERHYGALQGLNKDETAQKYGEEQVHIWRRSVDVRPPALTEDDPRYEATDPRYKTLKKGEFPLTECLEDTEKRVLAYWHSEIAPTLKSGNKVIISSHGNTIRSLVKYLDNLSSDGVVSLNIPTSIPLVYELDENLRPIRHYYLSMDGEVPEGEIPKHISF</sequence>
<feature type="chain" id="PRO_1000135917" description="2,3-bisphosphoglycerate-dependent phosphoglycerate mutase">
    <location>
        <begin position="1"/>
        <end position="245"/>
    </location>
</feature>
<feature type="active site" description="Tele-phosphohistidine intermediate" evidence="1">
    <location>
        <position position="9"/>
    </location>
</feature>
<feature type="active site" description="Proton donor/acceptor" evidence="1">
    <location>
        <position position="87"/>
    </location>
</feature>
<feature type="binding site" evidence="1">
    <location>
        <begin position="8"/>
        <end position="15"/>
    </location>
    <ligand>
        <name>substrate</name>
    </ligand>
</feature>
<feature type="binding site" evidence="1">
    <location>
        <begin position="21"/>
        <end position="22"/>
    </location>
    <ligand>
        <name>substrate</name>
    </ligand>
</feature>
<feature type="binding site" evidence="1">
    <location>
        <position position="60"/>
    </location>
    <ligand>
        <name>substrate</name>
    </ligand>
</feature>
<feature type="binding site" evidence="1">
    <location>
        <begin position="87"/>
        <end position="90"/>
    </location>
    <ligand>
        <name>substrate</name>
    </ligand>
</feature>
<feature type="binding site" evidence="1">
    <location>
        <position position="98"/>
    </location>
    <ligand>
        <name>substrate</name>
    </ligand>
</feature>
<feature type="binding site" evidence="1">
    <location>
        <begin position="114"/>
        <end position="115"/>
    </location>
    <ligand>
        <name>substrate</name>
    </ligand>
</feature>
<feature type="binding site" evidence="1">
    <location>
        <begin position="183"/>
        <end position="184"/>
    </location>
    <ligand>
        <name>substrate</name>
    </ligand>
</feature>
<feature type="site" description="Transition state stabilizer" evidence="1">
    <location>
        <position position="182"/>
    </location>
</feature>
<comment type="function">
    <text evidence="1">Catalyzes the interconversion of 2-phosphoglycerate and 3-phosphoglycerate.</text>
</comment>
<comment type="catalytic activity">
    <reaction evidence="1">
        <text>(2R)-2-phosphoglycerate = (2R)-3-phosphoglycerate</text>
        <dbReference type="Rhea" id="RHEA:15901"/>
        <dbReference type="ChEBI" id="CHEBI:58272"/>
        <dbReference type="ChEBI" id="CHEBI:58289"/>
        <dbReference type="EC" id="5.4.2.11"/>
    </reaction>
</comment>
<comment type="pathway">
    <text evidence="1">Carbohydrate degradation; glycolysis; pyruvate from D-glyceraldehyde 3-phosphate: step 3/5.</text>
</comment>
<comment type="similarity">
    <text evidence="1">Belongs to the phosphoglycerate mutase family. BPG-dependent PGAM subfamily.</text>
</comment>
<keyword id="KW-0312">Gluconeogenesis</keyword>
<keyword id="KW-0324">Glycolysis</keyword>
<keyword id="KW-0413">Isomerase</keyword>
<organism>
    <name type="scientific">Bacillus cereus (strain B4264)</name>
    <dbReference type="NCBI Taxonomy" id="405532"/>
    <lineage>
        <taxon>Bacteria</taxon>
        <taxon>Bacillati</taxon>
        <taxon>Bacillota</taxon>
        <taxon>Bacilli</taxon>
        <taxon>Bacillales</taxon>
        <taxon>Bacillaceae</taxon>
        <taxon>Bacillus</taxon>
        <taxon>Bacillus cereus group</taxon>
    </lineage>
</organism>